<feature type="chain" id="PRO_1000020933" description="Protease HtpX">
    <location>
        <begin position="1"/>
        <end position="287"/>
    </location>
</feature>
<feature type="transmembrane region" description="Helical" evidence="1">
    <location>
        <begin position="4"/>
        <end position="24"/>
    </location>
</feature>
<feature type="transmembrane region" description="Helical" evidence="1">
    <location>
        <begin position="33"/>
        <end position="53"/>
    </location>
</feature>
<feature type="transmembrane region" description="Helical" evidence="1">
    <location>
        <begin position="154"/>
        <end position="174"/>
    </location>
</feature>
<feature type="transmembrane region" description="Helical" evidence="1">
    <location>
        <begin position="195"/>
        <end position="215"/>
    </location>
</feature>
<feature type="active site" evidence="1">
    <location>
        <position position="140"/>
    </location>
</feature>
<feature type="binding site" evidence="1">
    <location>
        <position position="139"/>
    </location>
    <ligand>
        <name>Zn(2+)</name>
        <dbReference type="ChEBI" id="CHEBI:29105"/>
        <note>catalytic</note>
    </ligand>
</feature>
<feature type="binding site" evidence="1">
    <location>
        <position position="143"/>
    </location>
    <ligand>
        <name>Zn(2+)</name>
        <dbReference type="ChEBI" id="CHEBI:29105"/>
        <note>catalytic</note>
    </ligand>
</feature>
<feature type="binding site" evidence="1">
    <location>
        <position position="220"/>
    </location>
    <ligand>
        <name>Zn(2+)</name>
        <dbReference type="ChEBI" id="CHEBI:29105"/>
        <note>catalytic</note>
    </ligand>
</feature>
<evidence type="ECO:0000255" key="1">
    <source>
        <dbReference type="HAMAP-Rule" id="MF_00188"/>
    </source>
</evidence>
<dbReference type="EC" id="3.4.24.-" evidence="1"/>
<dbReference type="EMBL" id="CP000753">
    <property type="protein sequence ID" value="ABS08730.1"/>
    <property type="molecule type" value="Genomic_DNA"/>
</dbReference>
<dbReference type="RefSeq" id="WP_012089480.1">
    <property type="nucleotide sequence ID" value="NC_009665.1"/>
</dbReference>
<dbReference type="SMR" id="A6WPJ1"/>
<dbReference type="MEROPS" id="M48.002"/>
<dbReference type="KEGG" id="sbm:Shew185_2595"/>
<dbReference type="HOGENOM" id="CLU_042266_1_0_6"/>
<dbReference type="GO" id="GO:0005886">
    <property type="term" value="C:plasma membrane"/>
    <property type="evidence" value="ECO:0007669"/>
    <property type="project" value="UniProtKB-SubCell"/>
</dbReference>
<dbReference type="GO" id="GO:0004222">
    <property type="term" value="F:metalloendopeptidase activity"/>
    <property type="evidence" value="ECO:0007669"/>
    <property type="project" value="UniProtKB-UniRule"/>
</dbReference>
<dbReference type="GO" id="GO:0008270">
    <property type="term" value="F:zinc ion binding"/>
    <property type="evidence" value="ECO:0007669"/>
    <property type="project" value="UniProtKB-UniRule"/>
</dbReference>
<dbReference type="GO" id="GO:0006508">
    <property type="term" value="P:proteolysis"/>
    <property type="evidence" value="ECO:0007669"/>
    <property type="project" value="UniProtKB-KW"/>
</dbReference>
<dbReference type="CDD" id="cd07335">
    <property type="entry name" value="M48B_HtpX_like"/>
    <property type="match status" value="1"/>
</dbReference>
<dbReference type="FunFam" id="3.30.2010.10:FF:000001">
    <property type="entry name" value="Protease HtpX"/>
    <property type="match status" value="1"/>
</dbReference>
<dbReference type="Gene3D" id="3.30.2010.10">
    <property type="entry name" value="Metalloproteases ('zincins'), catalytic domain"/>
    <property type="match status" value="1"/>
</dbReference>
<dbReference type="HAMAP" id="MF_00188">
    <property type="entry name" value="Pept_M48_protease_HtpX"/>
    <property type="match status" value="1"/>
</dbReference>
<dbReference type="InterPro" id="IPR050083">
    <property type="entry name" value="HtpX_protease"/>
</dbReference>
<dbReference type="InterPro" id="IPR022919">
    <property type="entry name" value="Pept_M48_protease_HtpX"/>
</dbReference>
<dbReference type="InterPro" id="IPR001915">
    <property type="entry name" value="Peptidase_M48"/>
</dbReference>
<dbReference type="NCBIfam" id="NF003965">
    <property type="entry name" value="PRK05457.1"/>
    <property type="match status" value="1"/>
</dbReference>
<dbReference type="PANTHER" id="PTHR43221">
    <property type="entry name" value="PROTEASE HTPX"/>
    <property type="match status" value="1"/>
</dbReference>
<dbReference type="PANTHER" id="PTHR43221:SF1">
    <property type="entry name" value="PROTEASE HTPX"/>
    <property type="match status" value="1"/>
</dbReference>
<dbReference type="Pfam" id="PF01435">
    <property type="entry name" value="Peptidase_M48"/>
    <property type="match status" value="1"/>
</dbReference>
<comment type="cofactor">
    <cofactor evidence="1">
        <name>Zn(2+)</name>
        <dbReference type="ChEBI" id="CHEBI:29105"/>
    </cofactor>
    <text evidence="1">Binds 1 zinc ion per subunit.</text>
</comment>
<comment type="subcellular location">
    <subcellularLocation>
        <location evidence="1">Cell inner membrane</location>
        <topology evidence="1">Multi-pass membrane protein</topology>
    </subcellularLocation>
</comment>
<comment type="similarity">
    <text evidence="1">Belongs to the peptidase M48B family.</text>
</comment>
<keyword id="KW-0997">Cell inner membrane</keyword>
<keyword id="KW-1003">Cell membrane</keyword>
<keyword id="KW-0378">Hydrolase</keyword>
<keyword id="KW-0472">Membrane</keyword>
<keyword id="KW-0479">Metal-binding</keyword>
<keyword id="KW-0482">Metalloprotease</keyword>
<keyword id="KW-0645">Protease</keyword>
<keyword id="KW-0812">Transmembrane</keyword>
<keyword id="KW-1133">Transmembrane helix</keyword>
<keyword id="KW-0862">Zinc</keyword>
<reference key="1">
    <citation type="submission" date="2007-07" db="EMBL/GenBank/DDBJ databases">
        <title>Complete sequence of chromosome of Shewanella baltica OS185.</title>
        <authorList>
            <consortium name="US DOE Joint Genome Institute"/>
            <person name="Copeland A."/>
            <person name="Lucas S."/>
            <person name="Lapidus A."/>
            <person name="Barry K."/>
            <person name="Glavina del Rio T."/>
            <person name="Dalin E."/>
            <person name="Tice H."/>
            <person name="Pitluck S."/>
            <person name="Sims D."/>
            <person name="Brettin T."/>
            <person name="Bruce D."/>
            <person name="Detter J.C."/>
            <person name="Han C."/>
            <person name="Schmutz J."/>
            <person name="Larimer F."/>
            <person name="Land M."/>
            <person name="Hauser L."/>
            <person name="Kyrpides N."/>
            <person name="Mikhailova N."/>
            <person name="Brettar I."/>
            <person name="Rodrigues J."/>
            <person name="Konstantinidis K."/>
            <person name="Tiedje J."/>
            <person name="Richardson P."/>
        </authorList>
    </citation>
    <scope>NUCLEOTIDE SEQUENCE [LARGE SCALE GENOMIC DNA]</scope>
    <source>
        <strain>OS185</strain>
    </source>
</reference>
<accession>A6WPJ1</accession>
<organism>
    <name type="scientific">Shewanella baltica (strain OS185)</name>
    <dbReference type="NCBI Taxonomy" id="402882"/>
    <lineage>
        <taxon>Bacteria</taxon>
        <taxon>Pseudomonadati</taxon>
        <taxon>Pseudomonadota</taxon>
        <taxon>Gammaproteobacteria</taxon>
        <taxon>Alteromonadales</taxon>
        <taxon>Shewanellaceae</taxon>
        <taxon>Shewanella</taxon>
    </lineage>
</organism>
<gene>
    <name evidence="1" type="primary">htpX</name>
    <name type="ordered locus">Shew185_2595</name>
</gene>
<protein>
    <recommendedName>
        <fullName evidence="1">Protease HtpX</fullName>
        <ecNumber evidence="1">3.4.24.-</ecNumber>
    </recommendedName>
    <alternativeName>
        <fullName evidence="1">Heat shock protein HtpX</fullName>
    </alternativeName>
</protein>
<proteinExistence type="inferred from homology"/>
<name>HTPX_SHEB8</name>
<sequence>MKRIFLLIATNLAVLLVASIVMSILGVNTSTMGGLLVFAAIFGFGGAFISLAISKWMAKKTMGCEVITTPRDSTERWLVETVARQAKQAGIKMPEVAIYQSSDMNAFATGPSKDNSLVAVSTGLLYGMSQDEIEGVLAHEVSHVANGDMVTLTLIQGVVNTFVIFAARVVAGIINNFVSSNDEEGEGLGMFAYMAVVFVLDMLFGILASIIVAYFSRIREYKADEGAARLAGKGKMIAALERLRQGPESTAMPAQMSAFGINGKRSMAEMMMSHPPLEKRIAALRAS</sequence>